<sequence length="843" mass="97365">MNTNKLEENSPEEDTGKFEWKPKVKDEFKDISIYFSKEEWAEMGEWEKIRYRNVKRNYKMLISIGLRAPRPAFMCYQRQAMKPQINDSEDSDEEWTPKQQVSPPWVPFRVKHSKQQKESSRMPFSGESNVKEGSGIENLLNTSGSEHVQKPVSSLEEGNTSGQHSGKKLKLRKKNVEVKMYRLRERKGLAYEEVSEPQDDDYLYCEKCQNFFIDSCPNHGPPLFVKDSMVDRGHPNHSVLSLPPGLRISPSGIPEAGLGVWNEASDLPVGLHFGPYEGQITEDEEAANSGYSWLITKGRNCYEYVDGQDESQANWMRYVNCARDDEEQNLVAFQYHRKIFYRTCRVIRPGCELLVWYGDEYGQELGIKWGSKMKKGFTAGRELRTEIHPCLLCSLAFSSQKFLTQHMEWNHRTEIFPGTSARINPKPGDPCSDQLQEQHVDSQNKNDKASNEVKRKSKPRQRISTTFPSTLKEQMRSEESKRTVEELRTGQTTNTEDTVKSFIASEISSIERQCGQYFSDKSNVNEHQKTHTGEKPYVCRECGRGFTQNSHLIQHQRTHTGEKPYVCRECGRGFTQKSDLIKHQRTHTGEKPYVCRECGRGFTQKSDLIKHQRTHTGEKPYVCRECGRGFTQKSVLIKHQRTHTGEKPYVCRECGRGFTQKSVLIKHQRTHTGEKPYVCRECGRGFTAKSVLIQHQRTHTGEKPYVCRECGRGFTAKSNLIQHQRTHTGEKPYVCRECGRGFTAKSVLIQHQRTHTGEKPYVCRECGRGFTAKSVLIQHQRTHTGEKPYVCRECGRGFTQKSNLIKHQRTHTGEKPYVCRECGWGFTQKSDLIQHQRTHTREK</sequence>
<keyword id="KW-0002">3D-structure</keyword>
<keyword id="KW-0010">Activator</keyword>
<keyword id="KW-0025">Alternative splicing</keyword>
<keyword id="KW-0156">Chromatin regulator</keyword>
<keyword id="KW-0158">Chromosome</keyword>
<keyword id="KW-0238">DNA-binding</keyword>
<keyword id="KW-0469">Meiosis</keyword>
<keyword id="KW-0479">Metal-binding</keyword>
<keyword id="KW-0488">Methylation</keyword>
<keyword id="KW-0489">Methyltransferase</keyword>
<keyword id="KW-0539">Nucleus</keyword>
<keyword id="KW-1185">Reference proteome</keyword>
<keyword id="KW-0677">Repeat</keyword>
<keyword id="KW-0949">S-adenosyl-L-methionine</keyword>
<keyword id="KW-0804">Transcription</keyword>
<keyword id="KW-0805">Transcription regulation</keyword>
<keyword id="KW-0808">Transferase</keyword>
<keyword id="KW-0862">Zinc</keyword>
<keyword id="KW-0863">Zinc-finger</keyword>
<evidence type="ECO:0000250" key="1">
    <source>
        <dbReference type="UniProtKB" id="Q9NQV7"/>
    </source>
</evidence>
<evidence type="ECO:0000255" key="2">
    <source>
        <dbReference type="PROSITE-ProRule" id="PRU00042"/>
    </source>
</evidence>
<evidence type="ECO:0000255" key="3">
    <source>
        <dbReference type="PROSITE-ProRule" id="PRU00120"/>
    </source>
</evidence>
<evidence type="ECO:0000255" key="4">
    <source>
        <dbReference type="PROSITE-ProRule" id="PRU00190"/>
    </source>
</evidence>
<evidence type="ECO:0000256" key="5">
    <source>
        <dbReference type="SAM" id="MobiDB-lite"/>
    </source>
</evidence>
<evidence type="ECO:0000269" key="6">
    <source>
    </source>
</evidence>
<evidence type="ECO:0000269" key="7">
    <source>
    </source>
</evidence>
<evidence type="ECO:0000269" key="8">
    <source>
    </source>
</evidence>
<evidence type="ECO:0000269" key="9">
    <source>
    </source>
</evidence>
<evidence type="ECO:0000269" key="10">
    <source>
    </source>
</evidence>
<evidence type="ECO:0000269" key="11">
    <source>
    </source>
</evidence>
<evidence type="ECO:0000269" key="12">
    <source>
    </source>
</evidence>
<evidence type="ECO:0000269" key="13">
    <source>
    </source>
</evidence>
<evidence type="ECO:0000269" key="14">
    <source>
    </source>
</evidence>
<evidence type="ECO:0000269" key="15">
    <source>
    </source>
</evidence>
<evidence type="ECO:0000269" key="16">
    <source>
    </source>
</evidence>
<evidence type="ECO:0000269" key="17">
    <source>
    </source>
</evidence>
<evidence type="ECO:0000303" key="18">
    <source>
    </source>
</evidence>
<evidence type="ECO:0000305" key="19"/>
<evidence type="ECO:0000312" key="20">
    <source>
        <dbReference type="MGI" id="MGI:2384854"/>
    </source>
</evidence>
<evidence type="ECO:0007744" key="21">
    <source>
        <dbReference type="PDB" id="4C1Q"/>
    </source>
</evidence>
<evidence type="ECO:0007829" key="22">
    <source>
        <dbReference type="PDB" id="4C1Q"/>
    </source>
</evidence>
<proteinExistence type="evidence at protein level"/>
<gene>
    <name evidence="20" type="primary">Prdm9</name>
    <name type="synonym">Hst1</name>
    <name type="synonym">Meisetz</name>
</gene>
<name>PRDM9_MOUSE</name>
<organism>
    <name type="scientific">Mus musculus</name>
    <name type="common">Mouse</name>
    <dbReference type="NCBI Taxonomy" id="10090"/>
    <lineage>
        <taxon>Eukaryota</taxon>
        <taxon>Metazoa</taxon>
        <taxon>Chordata</taxon>
        <taxon>Craniata</taxon>
        <taxon>Vertebrata</taxon>
        <taxon>Euteleostomi</taxon>
        <taxon>Mammalia</taxon>
        <taxon>Eutheria</taxon>
        <taxon>Euarchontoglires</taxon>
        <taxon>Glires</taxon>
        <taxon>Rodentia</taxon>
        <taxon>Myomorpha</taxon>
        <taxon>Muroidea</taxon>
        <taxon>Muridae</taxon>
        <taxon>Murinae</taxon>
        <taxon>Mus</taxon>
        <taxon>Mus</taxon>
    </lineage>
</organism>
<dbReference type="EC" id="2.1.1.-" evidence="14"/>
<dbReference type="EC" id="2.1.1.359" evidence="10 12"/>
<dbReference type="EC" id="2.1.1.354" evidence="6 9 10 12"/>
<dbReference type="EC" id="2.1.1.355" evidence="12"/>
<dbReference type="EC" id="2.1.1.362" evidence="10"/>
<dbReference type="EC" id="2.1.1.361" evidence="10"/>
<dbReference type="EMBL" id="AY294423">
    <property type="protein sequence ID" value="AAQ01511.1"/>
    <property type="molecule type" value="Genomic_DNA"/>
</dbReference>
<dbReference type="EMBL" id="AC154378">
    <property type="status" value="NOT_ANNOTATED_CDS"/>
    <property type="molecule type" value="Genomic_DNA"/>
</dbReference>
<dbReference type="EMBL" id="CT033750">
    <property type="status" value="NOT_ANNOTATED_CDS"/>
    <property type="molecule type" value="Genomic_DNA"/>
</dbReference>
<dbReference type="EMBL" id="BC012016">
    <property type="protein sequence ID" value="AAH12016.1"/>
    <property type="molecule type" value="mRNA"/>
</dbReference>
<dbReference type="EMBL" id="BC049903">
    <property type="protein sequence ID" value="AAH49903.1"/>
    <property type="status" value="ALT_INIT"/>
    <property type="molecule type" value="mRNA"/>
</dbReference>
<dbReference type="CCDS" id="CCDS49963.2">
    <molecule id="Q96EQ9-1"/>
</dbReference>
<dbReference type="CCDS" id="CCDS88997.1">
    <molecule id="Q96EQ9-4"/>
</dbReference>
<dbReference type="RefSeq" id="NP_001348365.1">
    <molecule id="Q96EQ9-4"/>
    <property type="nucleotide sequence ID" value="NM_001361436.1"/>
</dbReference>
<dbReference type="RefSeq" id="NP_659058.3">
    <molecule id="Q96EQ9-1"/>
    <property type="nucleotide sequence ID" value="NM_144809.3"/>
</dbReference>
<dbReference type="PDB" id="4C1Q">
    <property type="method" value="X-ray"/>
    <property type="resolution" value="2.30 A"/>
    <property type="chains" value="A/B=198-368"/>
</dbReference>
<dbReference type="PDBsum" id="4C1Q"/>
<dbReference type="SMR" id="Q96EQ9"/>
<dbReference type="FunCoup" id="Q96EQ9">
    <property type="interactions" value="206"/>
</dbReference>
<dbReference type="STRING" id="10090.ENSMUSP00000156841"/>
<dbReference type="iPTMnet" id="Q96EQ9"/>
<dbReference type="PhosphoSitePlus" id="Q96EQ9"/>
<dbReference type="PaxDb" id="10090-ENSMUSP00000131871"/>
<dbReference type="ProteomicsDB" id="289889">
    <molecule id="Q96EQ9-1"/>
</dbReference>
<dbReference type="ProteomicsDB" id="289890">
    <molecule id="Q96EQ9-2"/>
</dbReference>
<dbReference type="ProteomicsDB" id="289891">
    <molecule id="Q96EQ9-3"/>
</dbReference>
<dbReference type="ProteomicsDB" id="289892">
    <molecule id="Q96EQ9-4"/>
</dbReference>
<dbReference type="Antibodypedia" id="67566">
    <property type="antibodies" value="63 antibodies from 17 providers"/>
</dbReference>
<dbReference type="Ensembl" id="ENSMUST00000147532.8">
    <molecule id="Q96EQ9-4"/>
    <property type="protein sequence ID" value="ENSMUSP00000118454.2"/>
    <property type="gene ID" value="ENSMUSG00000051977.17"/>
</dbReference>
<dbReference type="Ensembl" id="ENSMUST00000167994.10">
    <molecule id="Q96EQ9-1"/>
    <property type="protein sequence ID" value="ENSMUSP00000131871.3"/>
    <property type="gene ID" value="ENSMUSG00000051977.17"/>
</dbReference>
<dbReference type="GeneID" id="213389"/>
<dbReference type="UCSC" id="uc008aos.1">
    <molecule id="Q96EQ9-4"/>
    <property type="organism name" value="mouse"/>
</dbReference>
<dbReference type="UCSC" id="uc029tan.1">
    <molecule id="Q96EQ9-1"/>
    <property type="organism name" value="mouse"/>
</dbReference>
<dbReference type="AGR" id="MGI:2384854"/>
<dbReference type="MGI" id="MGI:2384854">
    <property type="gene designation" value="Prdm9"/>
</dbReference>
<dbReference type="VEuPathDB" id="HostDB:ENSMUSG00000051977"/>
<dbReference type="eggNOG" id="KOG1721">
    <property type="taxonomic scope" value="Eukaryota"/>
</dbReference>
<dbReference type="eggNOG" id="KOG2461">
    <property type="taxonomic scope" value="Eukaryota"/>
</dbReference>
<dbReference type="GeneTree" id="ENSGT00940000158211"/>
<dbReference type="HOGENOM" id="CLU_983403_0_0_1"/>
<dbReference type="InParanoid" id="Q96EQ9"/>
<dbReference type="PhylomeDB" id="Q96EQ9"/>
<dbReference type="Reactome" id="R-MMU-3214841">
    <property type="pathway name" value="PKMTs methylate histone lysines"/>
</dbReference>
<dbReference type="ChiTaRS" id="Prdm9">
    <property type="organism name" value="mouse"/>
</dbReference>
<dbReference type="EvolutionaryTrace" id="Q96EQ9"/>
<dbReference type="PRO" id="PR:Q96EQ9"/>
<dbReference type="Proteomes" id="UP000000589">
    <property type="component" value="Chromosome 17"/>
</dbReference>
<dbReference type="RNAct" id="Q96EQ9">
    <property type="molecule type" value="protein"/>
</dbReference>
<dbReference type="Bgee" id="ENSMUSG00000051977">
    <property type="expression patterns" value="Expressed in retinal neural layer and 73 other cell types or tissues"/>
</dbReference>
<dbReference type="ExpressionAtlas" id="Q96EQ9">
    <property type="expression patterns" value="baseline and differential"/>
</dbReference>
<dbReference type="GO" id="GO:0000785">
    <property type="term" value="C:chromatin"/>
    <property type="evidence" value="ECO:0000314"/>
    <property type="project" value="UniProtKB"/>
</dbReference>
<dbReference type="GO" id="GO:0005654">
    <property type="term" value="C:nucleoplasm"/>
    <property type="evidence" value="ECO:0000304"/>
    <property type="project" value="Reactome"/>
</dbReference>
<dbReference type="GO" id="GO:0005634">
    <property type="term" value="C:nucleus"/>
    <property type="evidence" value="ECO:0000314"/>
    <property type="project" value="UniProtKB"/>
</dbReference>
<dbReference type="GO" id="GO:0046975">
    <property type="term" value="F:histone H3K36 methyltransferase activity"/>
    <property type="evidence" value="ECO:0000315"/>
    <property type="project" value="UniProtKB"/>
</dbReference>
<dbReference type="GO" id="GO:0140955">
    <property type="term" value="F:histone H3K36 trimethyltransferase activity"/>
    <property type="evidence" value="ECO:0007669"/>
    <property type="project" value="UniProtKB-EC"/>
</dbReference>
<dbReference type="GO" id="GO:0042800">
    <property type="term" value="F:histone H3K4 methyltransferase activity"/>
    <property type="evidence" value="ECO:0000314"/>
    <property type="project" value="UniProtKB"/>
</dbReference>
<dbReference type="GO" id="GO:0140999">
    <property type="term" value="F:histone H3K4 trimethyltransferase activity"/>
    <property type="evidence" value="ECO:0007669"/>
    <property type="project" value="UniProtKB-EC"/>
</dbReference>
<dbReference type="GO" id="GO:0140949">
    <property type="term" value="F:histone H3K9 trimethyltransferase activity"/>
    <property type="evidence" value="ECO:0007669"/>
    <property type="project" value="UniProtKB-EC"/>
</dbReference>
<dbReference type="GO" id="GO:0140944">
    <property type="term" value="F:histone H4K20 monomethyltransferase activity"/>
    <property type="evidence" value="ECO:0007669"/>
    <property type="project" value="UniProtKB-EC"/>
</dbReference>
<dbReference type="GO" id="GO:0140941">
    <property type="term" value="F:histone H4K20me methyltransferase activity"/>
    <property type="evidence" value="ECO:0007669"/>
    <property type="project" value="UniProtKB-EC"/>
</dbReference>
<dbReference type="GO" id="GO:0042803">
    <property type="term" value="F:protein homodimerization activity"/>
    <property type="evidence" value="ECO:0000314"/>
    <property type="project" value="UniProtKB"/>
</dbReference>
<dbReference type="GO" id="GO:0010844">
    <property type="term" value="F:recombination hotspot binding"/>
    <property type="evidence" value="ECO:0000314"/>
    <property type="project" value="MGI"/>
</dbReference>
<dbReference type="GO" id="GO:0043565">
    <property type="term" value="F:sequence-specific DNA binding"/>
    <property type="evidence" value="ECO:0000314"/>
    <property type="project" value="MGI"/>
</dbReference>
<dbReference type="GO" id="GO:0000976">
    <property type="term" value="F:transcription cis-regulatory region binding"/>
    <property type="evidence" value="ECO:0000250"/>
    <property type="project" value="UniProtKB"/>
</dbReference>
<dbReference type="GO" id="GO:0008270">
    <property type="term" value="F:zinc ion binding"/>
    <property type="evidence" value="ECO:0007669"/>
    <property type="project" value="UniProtKB-KW"/>
</dbReference>
<dbReference type="GO" id="GO:1990918">
    <property type="term" value="P:double-strand break repair involved in meiotic recombination"/>
    <property type="evidence" value="ECO:0000315"/>
    <property type="project" value="UniProtKB"/>
</dbReference>
<dbReference type="GO" id="GO:0007292">
    <property type="term" value="P:female gamete generation"/>
    <property type="evidence" value="ECO:0000315"/>
    <property type="project" value="UniProtKB"/>
</dbReference>
<dbReference type="GO" id="GO:0007129">
    <property type="term" value="P:homologous chromosome pairing at meiosis"/>
    <property type="evidence" value="ECO:0000315"/>
    <property type="project" value="UniProtKB"/>
</dbReference>
<dbReference type="GO" id="GO:0048232">
    <property type="term" value="P:male gamete generation"/>
    <property type="evidence" value="ECO:0000315"/>
    <property type="project" value="UniProtKB"/>
</dbReference>
<dbReference type="GO" id="GO:0007127">
    <property type="term" value="P:meiosis I"/>
    <property type="evidence" value="ECO:0000315"/>
    <property type="project" value="MGI"/>
</dbReference>
<dbReference type="GO" id="GO:0006311">
    <property type="term" value="P:meiotic gene conversion"/>
    <property type="evidence" value="ECO:0000266"/>
    <property type="project" value="MGI"/>
</dbReference>
<dbReference type="GO" id="GO:0032259">
    <property type="term" value="P:methylation"/>
    <property type="evidence" value="ECO:0007669"/>
    <property type="project" value="UniProtKB-KW"/>
</dbReference>
<dbReference type="GO" id="GO:0043066">
    <property type="term" value="P:negative regulation of apoptotic process"/>
    <property type="evidence" value="ECO:0000315"/>
    <property type="project" value="UniProtKB"/>
</dbReference>
<dbReference type="GO" id="GO:1905516">
    <property type="term" value="P:positive regulation of fertilization"/>
    <property type="evidence" value="ECO:0000315"/>
    <property type="project" value="UniProtKB"/>
</dbReference>
<dbReference type="GO" id="GO:0060903">
    <property type="term" value="P:positive regulation of meiosis I"/>
    <property type="evidence" value="ECO:0000315"/>
    <property type="project" value="MGI"/>
</dbReference>
<dbReference type="GO" id="GO:0010845">
    <property type="term" value="P:positive regulation of reciprocal meiotic recombination"/>
    <property type="evidence" value="ECO:0000315"/>
    <property type="project" value="MGI"/>
</dbReference>
<dbReference type="GO" id="GO:0045944">
    <property type="term" value="P:positive regulation of transcription by RNA polymerase II"/>
    <property type="evidence" value="ECO:0000314"/>
    <property type="project" value="MGI"/>
</dbReference>
<dbReference type="GO" id="GO:0007283">
    <property type="term" value="P:spermatogenesis"/>
    <property type="evidence" value="ECO:0000315"/>
    <property type="project" value="MGI"/>
</dbReference>
<dbReference type="CDD" id="cd07765">
    <property type="entry name" value="KRAB_A-box"/>
    <property type="match status" value="1"/>
</dbReference>
<dbReference type="CDD" id="cd19193">
    <property type="entry name" value="PR-SET_PRDM7_9"/>
    <property type="match status" value="1"/>
</dbReference>
<dbReference type="FunFam" id="3.30.160.60:FF:000601">
    <property type="entry name" value="Histone-lysine N-methyltransferase PRDM9"/>
    <property type="match status" value="11"/>
</dbReference>
<dbReference type="FunFam" id="3.30.160.60:FF:001312">
    <property type="entry name" value="Histone-lysine N-methyltransferase PRDM9"/>
    <property type="match status" value="1"/>
</dbReference>
<dbReference type="FunFam" id="2.170.270.10:FF:000031">
    <property type="entry name" value="probable histone-lysine N-methyltransferase PRDM7"/>
    <property type="match status" value="1"/>
</dbReference>
<dbReference type="Gene3D" id="6.10.140.140">
    <property type="match status" value="1"/>
</dbReference>
<dbReference type="Gene3D" id="3.30.160.60">
    <property type="entry name" value="Classic Zinc Finger"/>
    <property type="match status" value="13"/>
</dbReference>
<dbReference type="Gene3D" id="2.170.270.10">
    <property type="entry name" value="SET domain"/>
    <property type="match status" value="1"/>
</dbReference>
<dbReference type="InterPro" id="IPR003655">
    <property type="entry name" value="aKRAB"/>
</dbReference>
<dbReference type="InterPro" id="IPR001909">
    <property type="entry name" value="KRAB"/>
</dbReference>
<dbReference type="InterPro" id="IPR036051">
    <property type="entry name" value="KRAB_dom_sf"/>
</dbReference>
<dbReference type="InterPro" id="IPR048414">
    <property type="entry name" value="PDRM9-like_Znf-C2H2"/>
</dbReference>
<dbReference type="InterPro" id="IPR044417">
    <property type="entry name" value="PRDM7_9_PR-SET"/>
</dbReference>
<dbReference type="InterPro" id="IPR001214">
    <property type="entry name" value="SET_dom"/>
</dbReference>
<dbReference type="InterPro" id="IPR046341">
    <property type="entry name" value="SET_dom_sf"/>
</dbReference>
<dbReference type="InterPro" id="IPR019041">
    <property type="entry name" value="SSXRD_motif"/>
</dbReference>
<dbReference type="InterPro" id="IPR036236">
    <property type="entry name" value="Znf_C2H2_sf"/>
</dbReference>
<dbReference type="InterPro" id="IPR013087">
    <property type="entry name" value="Znf_C2H2_type"/>
</dbReference>
<dbReference type="PANTHER" id="PTHR23235">
    <property type="entry name" value="KRUEPPEL-LIKE TRANSCRIPTION FACTOR"/>
    <property type="match status" value="1"/>
</dbReference>
<dbReference type="PANTHER" id="PTHR23235:SF142">
    <property type="entry name" value="ZINC FINGER PROTEIN 384"/>
    <property type="match status" value="1"/>
</dbReference>
<dbReference type="Pfam" id="PF01352">
    <property type="entry name" value="KRAB"/>
    <property type="match status" value="1"/>
</dbReference>
<dbReference type="Pfam" id="PF21549">
    <property type="entry name" value="PRDM2_PR"/>
    <property type="match status" value="1"/>
</dbReference>
<dbReference type="Pfam" id="PF09514">
    <property type="entry name" value="SSXRD"/>
    <property type="match status" value="1"/>
</dbReference>
<dbReference type="Pfam" id="PF00096">
    <property type="entry name" value="zf-C2H2"/>
    <property type="match status" value="11"/>
</dbReference>
<dbReference type="Pfam" id="PF21225">
    <property type="entry name" value="zf-C2H2_5"/>
    <property type="match status" value="1"/>
</dbReference>
<dbReference type="SMART" id="SM00349">
    <property type="entry name" value="KRAB"/>
    <property type="match status" value="1"/>
</dbReference>
<dbReference type="SMART" id="SM00355">
    <property type="entry name" value="ZnF_C2H2"/>
    <property type="match status" value="13"/>
</dbReference>
<dbReference type="SUPFAM" id="SSF57667">
    <property type="entry name" value="beta-beta-alpha zinc fingers"/>
    <property type="match status" value="6"/>
</dbReference>
<dbReference type="SUPFAM" id="SSF109640">
    <property type="entry name" value="KRAB domain (Kruppel-associated box)"/>
    <property type="match status" value="1"/>
</dbReference>
<dbReference type="SUPFAM" id="SSF82199">
    <property type="entry name" value="SET domain"/>
    <property type="match status" value="1"/>
</dbReference>
<dbReference type="PROSITE" id="PS50806">
    <property type="entry name" value="KRAB_RELATED"/>
    <property type="match status" value="1"/>
</dbReference>
<dbReference type="PROSITE" id="PS50280">
    <property type="entry name" value="SET"/>
    <property type="match status" value="1"/>
</dbReference>
<dbReference type="PROSITE" id="PS00028">
    <property type="entry name" value="ZINC_FINGER_C2H2_1"/>
    <property type="match status" value="12"/>
</dbReference>
<dbReference type="PROSITE" id="PS50157">
    <property type="entry name" value="ZINC_FINGER_C2H2_2"/>
    <property type="match status" value="12"/>
</dbReference>
<accession>Q96EQ9</accession>
<accession>B8JJZ8</accession>
<accession>Q0D2N4</accession>
<feature type="chain" id="PRO_0000363960" description="Histone-lysine N-methyltransferase PRDM9">
    <location>
        <begin position="1"/>
        <end position="843"/>
    </location>
</feature>
<feature type="domain" description="KRAB-related" evidence="3">
    <location>
        <begin position="23"/>
        <end position="86"/>
    </location>
</feature>
<feature type="domain" description="SET" evidence="4">
    <location>
        <begin position="244"/>
        <end position="358"/>
    </location>
</feature>
<feature type="zinc finger region" description="C2H2-type 1" evidence="2">
    <location>
        <begin position="388"/>
        <end position="411"/>
    </location>
</feature>
<feature type="zinc finger region" description="C2H2-type 2; degenerate" evidence="2">
    <location>
        <begin position="513"/>
        <end position="531"/>
    </location>
</feature>
<feature type="zinc finger region" description="C2H2-type 3" evidence="2">
    <location>
        <begin position="537"/>
        <end position="559"/>
    </location>
</feature>
<feature type="zinc finger region" description="C2H2-type 4" evidence="2">
    <location>
        <begin position="565"/>
        <end position="587"/>
    </location>
</feature>
<feature type="zinc finger region" description="C2H2-type 5" evidence="2">
    <location>
        <begin position="593"/>
        <end position="615"/>
    </location>
</feature>
<feature type="zinc finger region" description="C2H2-type 6" evidence="2">
    <location>
        <begin position="621"/>
        <end position="643"/>
    </location>
</feature>
<feature type="zinc finger region" description="C2H2-type 7" evidence="2">
    <location>
        <begin position="649"/>
        <end position="671"/>
    </location>
</feature>
<feature type="zinc finger region" description="C2H2-type 8" evidence="2">
    <location>
        <begin position="677"/>
        <end position="699"/>
    </location>
</feature>
<feature type="zinc finger region" description="C2H2-type 9" evidence="2">
    <location>
        <begin position="705"/>
        <end position="727"/>
    </location>
</feature>
<feature type="zinc finger region" description="C2H2-type 10" evidence="2">
    <location>
        <begin position="733"/>
        <end position="755"/>
    </location>
</feature>
<feature type="zinc finger region" description="C2H2-type 11" evidence="2">
    <location>
        <begin position="761"/>
        <end position="783"/>
    </location>
</feature>
<feature type="zinc finger region" description="C2H2-type 12" evidence="2">
    <location>
        <begin position="789"/>
        <end position="811"/>
    </location>
</feature>
<feature type="zinc finger region" description="C2H2-type 13" evidence="2">
    <location>
        <begin position="817"/>
        <end position="839"/>
    </location>
</feature>
<feature type="region of interest" description="Disordered" evidence="5">
    <location>
        <begin position="85"/>
        <end position="104"/>
    </location>
</feature>
<feature type="region of interest" description="Disordered" evidence="5">
    <location>
        <begin position="110"/>
        <end position="170"/>
    </location>
</feature>
<feature type="region of interest" description="Disordered" evidence="5">
    <location>
        <begin position="418"/>
        <end position="493"/>
    </location>
</feature>
<feature type="region of interest" description="DNA-binding" evidence="1">
    <location>
        <begin position="715"/>
        <end position="805"/>
    </location>
</feature>
<feature type="compositionally biased region" description="Basic and acidic residues" evidence="5">
    <location>
        <begin position="436"/>
        <end position="454"/>
    </location>
</feature>
<feature type="compositionally biased region" description="Polar residues" evidence="5">
    <location>
        <begin position="462"/>
        <end position="472"/>
    </location>
</feature>
<feature type="compositionally biased region" description="Basic and acidic residues" evidence="5">
    <location>
        <begin position="473"/>
        <end position="488"/>
    </location>
</feature>
<feature type="binding site" evidence="9 21">
    <location>
        <position position="205"/>
    </location>
    <ligand>
        <name>Zn(2+)</name>
        <dbReference type="ChEBI" id="CHEBI:29105"/>
        <label>1</label>
    </ligand>
</feature>
<feature type="binding site" evidence="9 21">
    <location>
        <position position="208"/>
    </location>
    <ligand>
        <name>Zn(2+)</name>
        <dbReference type="ChEBI" id="CHEBI:29105"/>
        <label>1</label>
    </ligand>
</feature>
<feature type="binding site" evidence="9 21">
    <location>
        <position position="216"/>
    </location>
    <ligand>
        <name>Zn(2+)</name>
        <dbReference type="ChEBI" id="CHEBI:29105"/>
        <label>1</label>
    </ligand>
</feature>
<feature type="binding site" evidence="9 21">
    <location>
        <position position="219"/>
    </location>
    <ligand>
        <name>Zn(2+)</name>
        <dbReference type="ChEBI" id="CHEBI:29105"/>
        <label>1</label>
    </ligand>
</feature>
<feature type="binding site" evidence="9 21">
    <location>
        <begin position="256"/>
        <end position="258"/>
    </location>
    <ligand>
        <name>S-adenosyl-L-methionine</name>
        <dbReference type="ChEBI" id="CHEBI:59789"/>
    </ligand>
</feature>
<feature type="binding site" evidence="9 21">
    <location>
        <begin position="288"/>
        <end position="294"/>
    </location>
    <ligand>
        <name>substrate</name>
    </ligand>
</feature>
<feature type="binding site" evidence="9 21">
    <location>
        <position position="291"/>
    </location>
    <ligand>
        <name>S-adenosyl-L-methionine</name>
        <dbReference type="ChEBI" id="CHEBI:59789"/>
    </ligand>
</feature>
<feature type="binding site" evidence="9 21">
    <location>
        <begin position="320"/>
        <end position="321"/>
    </location>
    <ligand>
        <name>S-adenosyl-L-methionine</name>
        <dbReference type="ChEBI" id="CHEBI:59789"/>
    </ligand>
</feature>
<feature type="binding site" evidence="9 21">
    <location>
        <position position="357"/>
    </location>
    <ligand>
        <name>substrate</name>
    </ligand>
</feature>
<feature type="binding site" evidence="1">
    <location>
        <position position="390"/>
    </location>
    <ligand>
        <name>Zn(2+)</name>
        <dbReference type="ChEBI" id="CHEBI:29105"/>
        <label>2</label>
    </ligand>
</feature>
<feature type="binding site" evidence="1">
    <location>
        <position position="393"/>
    </location>
    <ligand>
        <name>Zn(2+)</name>
        <dbReference type="ChEBI" id="CHEBI:29105"/>
        <label>2</label>
    </ligand>
</feature>
<feature type="binding site" evidence="1">
    <location>
        <position position="406"/>
    </location>
    <ligand>
        <name>Zn(2+)</name>
        <dbReference type="ChEBI" id="CHEBI:29105"/>
        <label>2</label>
    </ligand>
</feature>
<feature type="binding site" evidence="1">
    <location>
        <position position="411"/>
    </location>
    <ligand>
        <name>Zn(2+)</name>
        <dbReference type="ChEBI" id="CHEBI:29105"/>
        <label>2</label>
    </ligand>
</feature>
<feature type="binding site" evidence="1">
    <location>
        <position position="707"/>
    </location>
    <ligand>
        <name>Zn(2+)</name>
        <dbReference type="ChEBI" id="CHEBI:29105"/>
        <label>3</label>
    </ligand>
</feature>
<feature type="binding site" evidence="1">
    <location>
        <position position="710"/>
    </location>
    <ligand>
        <name>Zn(2+)</name>
        <dbReference type="ChEBI" id="CHEBI:29105"/>
        <label>3</label>
    </ligand>
</feature>
<feature type="binding site" evidence="1">
    <location>
        <position position="723"/>
    </location>
    <ligand>
        <name>Zn(2+)</name>
        <dbReference type="ChEBI" id="CHEBI:29105"/>
        <label>3</label>
    </ligand>
</feature>
<feature type="binding site" evidence="1">
    <location>
        <position position="727"/>
    </location>
    <ligand>
        <name>Zn(2+)</name>
        <dbReference type="ChEBI" id="CHEBI:29105"/>
        <label>3</label>
    </ligand>
</feature>
<feature type="binding site" evidence="1">
    <location>
        <position position="735"/>
    </location>
    <ligand>
        <name>Zn(2+)</name>
        <dbReference type="ChEBI" id="CHEBI:29105"/>
        <label>4</label>
    </ligand>
</feature>
<feature type="binding site" evidence="1">
    <location>
        <position position="738"/>
    </location>
    <ligand>
        <name>Zn(2+)</name>
        <dbReference type="ChEBI" id="CHEBI:29105"/>
        <label>4</label>
    </ligand>
</feature>
<feature type="binding site" evidence="1">
    <location>
        <position position="751"/>
    </location>
    <ligand>
        <name>Zn(2+)</name>
        <dbReference type="ChEBI" id="CHEBI:29105"/>
        <label>4</label>
    </ligand>
</feature>
<feature type="binding site" evidence="1">
    <location>
        <position position="755"/>
    </location>
    <ligand>
        <name>Zn(2+)</name>
        <dbReference type="ChEBI" id="CHEBI:29105"/>
        <label>4</label>
    </ligand>
</feature>
<feature type="binding site" evidence="1">
    <location>
        <position position="763"/>
    </location>
    <ligand>
        <name>Zn(2+)</name>
        <dbReference type="ChEBI" id="CHEBI:29105"/>
        <label>5</label>
    </ligand>
</feature>
<feature type="binding site" evidence="1">
    <location>
        <position position="766"/>
    </location>
    <ligand>
        <name>Zn(2+)</name>
        <dbReference type="ChEBI" id="CHEBI:29105"/>
        <label>5</label>
    </ligand>
</feature>
<feature type="binding site" evidence="1">
    <location>
        <position position="779"/>
    </location>
    <ligand>
        <name>Zn(2+)</name>
        <dbReference type="ChEBI" id="CHEBI:29105"/>
        <label>5</label>
    </ligand>
</feature>
<feature type="binding site" evidence="1">
    <location>
        <position position="783"/>
    </location>
    <ligand>
        <name>Zn(2+)</name>
        <dbReference type="ChEBI" id="CHEBI:29105"/>
        <label>5</label>
    </ligand>
</feature>
<feature type="binding site" evidence="1">
    <location>
        <position position="791"/>
    </location>
    <ligand>
        <name>Zn(2+)</name>
        <dbReference type="ChEBI" id="CHEBI:29105"/>
        <label>6</label>
    </ligand>
</feature>
<feature type="binding site" evidence="1">
    <location>
        <position position="794"/>
    </location>
    <ligand>
        <name>Zn(2+)</name>
        <dbReference type="ChEBI" id="CHEBI:29105"/>
        <label>6</label>
    </ligand>
</feature>
<feature type="binding site" evidence="1">
    <location>
        <position position="807"/>
    </location>
    <ligand>
        <name>Zn(2+)</name>
        <dbReference type="ChEBI" id="CHEBI:29105"/>
        <label>6</label>
    </ligand>
</feature>
<feature type="binding site" evidence="1">
    <location>
        <position position="811"/>
    </location>
    <ligand>
        <name>Zn(2+)</name>
        <dbReference type="ChEBI" id="CHEBI:29105"/>
        <label>6</label>
    </ligand>
</feature>
<feature type="modified residue" description="N6,N6,N6-trimethyllysine; alternate" evidence="14">
    <location>
        <position position="368"/>
    </location>
</feature>
<feature type="modified residue" description="N6-methyllysine; alternate" evidence="14">
    <location>
        <position position="368"/>
    </location>
</feature>
<feature type="modified residue" description="N6-methyllysine" evidence="14">
    <location>
        <position position="372"/>
    </location>
</feature>
<feature type="modified residue" description="N6-methyllysine" evidence="14">
    <location>
        <position position="374"/>
    </location>
</feature>
<feature type="splice variant" id="VSP_036374" description="In isoform 4." evidence="18">
    <location>
        <begin position="1"/>
        <end position="121"/>
    </location>
</feature>
<feature type="splice variant" id="VSP_036375" description="In isoform 3." evidence="19">
    <original>ELRTEIHPCLLCSLAFSSQKFLTQHMEWNHRTEIFPG</original>
    <variation>DLFIIICKYTVAVFRHTRRGSQILLRMVVSHHVVAGI</variation>
    <location>
        <begin position="382"/>
        <end position="418"/>
    </location>
</feature>
<feature type="splice variant" id="VSP_036376" description="In isoform 2 and isoform 4." evidence="18">
    <original>ELRTEIHPCLLCSLAFSSQKFLT</original>
    <variation>GGHYYDSLKKKEKREFSLRIFIF</variation>
    <location>
        <begin position="382"/>
        <end position="404"/>
    </location>
</feature>
<feature type="splice variant" id="VSP_036377" description="In isoform 2 and isoform 4." evidence="18">
    <location>
        <begin position="405"/>
        <end position="843"/>
    </location>
</feature>
<feature type="splice variant" id="VSP_036378" description="In isoform 3." evidence="19">
    <location>
        <begin position="419"/>
        <end position="843"/>
    </location>
</feature>
<feature type="mutagenesis site" description="Does not affect histone-lysine N-methyltransferase activity. Does not affect protein-lysine N-methyltransferas activity." evidence="14">
    <original>K</original>
    <variation>A</variation>
    <location>
        <position position="207"/>
    </location>
</feature>
<feature type="mutagenesis site" description="Does not affect histone-lysine N-methyltransferase activity. Does not affect protein-lysine N-methyltransferas activity." evidence="14">
    <original>K</original>
    <variation>A</variation>
    <location>
        <position position="226"/>
    </location>
</feature>
<feature type="mutagenesis site" description="Abolishes histone-lysine N-methyltransferase activity." evidence="6 9">
    <original>Y</original>
    <variation>F</variation>
    <location>
        <position position="276"/>
    </location>
</feature>
<feature type="mutagenesis site" description="Abolishes histone-lysine N-methyltransferase activity." evidence="6">
    <original>G</original>
    <variation>A</variation>
    <location>
        <position position="278"/>
    </location>
</feature>
<feature type="mutagenesis site" description="Does not affect histone-lysine N-methyltransferase activity. Does not affect protein-lysine N-methyltransferas activity." evidence="14">
    <original>K</original>
    <variation>A</variation>
    <location>
        <position position="297"/>
    </location>
</feature>
<feature type="mutagenesis site" description="Abolishes histone-lysine N-methyltransferase activity over enzyme concentration of 0-80 nM. Weakened histone-lysine N-methyltransferase activity over enzyme concentration &gt; 5 uM. Abolishes binding with S-adenosyl-L-methionine. Abolishes protein-lysine N-methyltransferas." evidence="10 14">
    <original>C</original>
    <variation>P</variation>
    <location>
        <position position="321"/>
    </location>
</feature>
<feature type="mutagenesis site" description="Does not affect histone-lysine N-methyltransferase activity. Does not affect protein-lysine N-methyltransferas activity." evidence="14">
    <original>K</original>
    <variation>A</variation>
    <location>
        <position position="338"/>
    </location>
</feature>
<feature type="mutagenesis site" description="Abolishes histone-lysine N-methyltransferase activity." evidence="9">
    <original>Y</original>
    <variation>F</variation>
    <location>
        <position position="341"/>
    </location>
</feature>
<feature type="mutagenesis site" description="Abolishes histone-lysine N-methyltransferase activity." evidence="9">
    <original>Y</original>
    <variation>F</variation>
    <location>
        <position position="357"/>
    </location>
</feature>
<feature type="mutagenesis site" description="Does not affect histone-lysine N-methyltransferase activity. Does not affect protein-lysine N-methyltransferas activity." evidence="14">
    <original>K</original>
    <variation>A</variation>
    <location>
        <position position="368"/>
    </location>
</feature>
<feature type="mutagenesis site" description="Does not affect histone-lysine N-methyltransferase activity. Does not affect protein-lysine N-methyltransferas activity." evidence="14">
    <original>K</original>
    <variation>A</variation>
    <location>
        <position position="372"/>
    </location>
</feature>
<feature type="mutagenesis site" description="Does not affect histone-lysine N-methyltransferase activity. Does not affect protein-lysine N-methyltransferas activity." evidence="14">
    <original>K</original>
    <variation>A</variation>
    <location>
        <position position="374"/>
    </location>
</feature>
<feature type="mutagenesis site" description="Does not affect histone-lysine N-methyltransferase activity. Does not affect protein-lysine N-methyltransferase activity." evidence="14">
    <original>K</original>
    <variation>A</variation>
    <location>
        <position position="375"/>
    </location>
</feature>
<feature type="strand" evidence="22">
    <location>
        <begin position="203"/>
        <end position="205"/>
    </location>
</feature>
<feature type="turn" evidence="22">
    <location>
        <begin position="206"/>
        <end position="209"/>
    </location>
</feature>
<feature type="strand" evidence="22">
    <location>
        <begin position="210"/>
        <end position="214"/>
    </location>
</feature>
<feature type="turn" evidence="22">
    <location>
        <begin position="217"/>
        <end position="219"/>
    </location>
</feature>
<feature type="helix" evidence="22">
    <location>
        <begin position="237"/>
        <end position="240"/>
    </location>
</feature>
<feature type="strand" evidence="22">
    <location>
        <begin position="246"/>
        <end position="250"/>
    </location>
</feature>
<feature type="strand" evidence="22">
    <location>
        <begin position="258"/>
        <end position="262"/>
    </location>
</feature>
<feature type="strand" evidence="22">
    <location>
        <begin position="278"/>
        <end position="281"/>
    </location>
</feature>
<feature type="helix" evidence="22">
    <location>
        <begin position="286"/>
        <end position="288"/>
    </location>
</feature>
<feature type="strand" evidence="22">
    <location>
        <begin position="289"/>
        <end position="296"/>
    </location>
</feature>
<feature type="strand" evidence="22">
    <location>
        <begin position="298"/>
        <end position="300"/>
    </location>
</feature>
<feature type="strand" evidence="22">
    <location>
        <begin position="302"/>
        <end position="306"/>
    </location>
</feature>
<feature type="turn" evidence="22">
    <location>
        <begin position="310"/>
        <end position="312"/>
    </location>
</feature>
<feature type="helix" evidence="22">
    <location>
        <begin position="315"/>
        <end position="318"/>
    </location>
</feature>
<feature type="turn" evidence="22">
    <location>
        <begin position="325"/>
        <end position="327"/>
    </location>
</feature>
<feature type="strand" evidence="22">
    <location>
        <begin position="330"/>
        <end position="335"/>
    </location>
</feature>
<feature type="strand" evidence="22">
    <location>
        <begin position="338"/>
        <end position="345"/>
    </location>
</feature>
<feature type="helix" evidence="22">
    <location>
        <begin position="359"/>
        <end position="364"/>
    </location>
</feature>
<comment type="function">
    <text evidence="6 8 9 10 11 12 13 14 15 17">Histone methyltransferase that sequentially mono-, di-, and tri-methylates both 'Lys-4' (H3K4) and 'Lys-36' (H3K36) of histone H3 to produce respectively trimethylated 'Lys-4' (H3K4me3) and trimethylated 'Lys-36' (H3K36me3) histone H3 and plays a key role in meiotic prophase by determining hotspot localization thereby promoting meiotic recombination (PubMed:16292313, PubMed:24095733, PubMed:24785241, PubMed:27362481, PubMed:29478809). Can also methylate all four core histones with H3 being the best substrate and the most highly modified (PubMed:24785241, PubMed:27362481). Is also able, on one hand, to mono and di-methylate H4K20 and on other hand to trimethylate H3K9 with the di-methylated H3K9 as the best substrate (PubMed:24785241, PubMed:27362481). During meiotic prophase, binds specific DNA sequences through its zinc finger domains thereby determining hotspot localization where it promotes local H3K4me3 and H3K36me3 enrichment on the same nucleosomes through its histone methyltransferase activity (PubMed:22028627, PubMed:27362481, PubMed:29478809). Thereby promotes double-stranded breaks (DSB) formation, at this subset of PRDM9-binding sites, that initiates meiotic recombination for the proper meiotic progression (PubMed:16292313, PubMed:29478809). During meiotic progression hotspot-bound PRDM9 interacts with several complexes; in early leptonema binds CDYL and EHMT2 followed by EWSR1 and CXXC1 by the end of leptonema (PubMed:27932493). EWSR1 joins PRDM9 with the chromosomal axis through REC8 (PubMed:27932493). In this way, controls the DSB repair pathway, pairing of homologous chromosomes and sex body formation (PubMed:16292313, PubMed:25894966). Moreover plays a central role in the transcriptional activation of genes during early meiotic prophase thanks to H3K4me3 and H3K36me3 enrichment that represents a specific tag for epigenetic transcriptional activation (PubMed:16292313). In addition performs automethylation (PubMed:28126738). Acetylation and phosphorylation of histone H3 attenuate or prevent histone H3 methylation (PubMed:27362481).</text>
</comment>
<comment type="catalytic activity">
    <reaction evidence="14">
        <text>L-lysyl-[protein] + S-adenosyl-L-methionine = N(6)-methyl-L-lysyl-[protein] + S-adenosyl-L-homocysteine + H(+)</text>
        <dbReference type="Rhea" id="RHEA:51736"/>
        <dbReference type="Rhea" id="RHEA-COMP:9752"/>
        <dbReference type="Rhea" id="RHEA-COMP:13053"/>
        <dbReference type="ChEBI" id="CHEBI:15378"/>
        <dbReference type="ChEBI" id="CHEBI:29969"/>
        <dbReference type="ChEBI" id="CHEBI:57856"/>
        <dbReference type="ChEBI" id="CHEBI:59789"/>
        <dbReference type="ChEBI" id="CHEBI:61929"/>
    </reaction>
    <physiologicalReaction direction="left-to-right" evidence="14">
        <dbReference type="Rhea" id="RHEA:51737"/>
    </physiologicalReaction>
</comment>
<comment type="catalytic activity">
    <reaction evidence="14">
        <text>N(6),N(6)-dimethyl-L-lysyl-[protein] + S-adenosyl-L-methionine = N(6),N(6),N(6)-trimethyl-L-lysyl-[protein] + S-adenosyl-L-homocysteine + H(+)</text>
        <dbReference type="Rhea" id="RHEA:54200"/>
        <dbReference type="Rhea" id="RHEA-COMP:13826"/>
        <dbReference type="Rhea" id="RHEA-COMP:13827"/>
        <dbReference type="ChEBI" id="CHEBI:15378"/>
        <dbReference type="ChEBI" id="CHEBI:57856"/>
        <dbReference type="ChEBI" id="CHEBI:59789"/>
        <dbReference type="ChEBI" id="CHEBI:61961"/>
        <dbReference type="ChEBI" id="CHEBI:61976"/>
    </reaction>
    <physiologicalReaction direction="left-to-right" evidence="14">
        <dbReference type="Rhea" id="RHEA:54201"/>
    </physiologicalReaction>
</comment>
<comment type="catalytic activity">
    <reaction evidence="6 9 10 12">
        <text>L-lysyl(4)-[histone H3] + 3 S-adenosyl-L-methionine = N(6),N(6),N(6)-trimethyl-L-lysyl(4)-[histone H3] + 3 S-adenosyl-L-homocysteine + 3 H(+)</text>
        <dbReference type="Rhea" id="RHEA:60260"/>
        <dbReference type="Rhea" id="RHEA-COMP:15537"/>
        <dbReference type="Rhea" id="RHEA-COMP:15547"/>
        <dbReference type="ChEBI" id="CHEBI:15378"/>
        <dbReference type="ChEBI" id="CHEBI:29969"/>
        <dbReference type="ChEBI" id="CHEBI:57856"/>
        <dbReference type="ChEBI" id="CHEBI:59789"/>
        <dbReference type="ChEBI" id="CHEBI:61961"/>
        <dbReference type="EC" id="2.1.1.354"/>
    </reaction>
    <physiologicalReaction direction="left-to-right" evidence="6 9 10 12">
        <dbReference type="Rhea" id="RHEA:60261"/>
    </physiologicalReaction>
</comment>
<comment type="catalytic activity">
    <reaction evidence="10 12">
        <text>L-lysyl(36)-[histone H3] + 3 S-adenosyl-L-methionine = N(6),N(6),N(6)-trimethyl-L-lysyl(36)-[histone H3] + 3 S-adenosyl-L-homocysteine + 3 H(+)</text>
        <dbReference type="Rhea" id="RHEA:60324"/>
        <dbReference type="Rhea" id="RHEA-COMP:9785"/>
        <dbReference type="Rhea" id="RHEA-COMP:15536"/>
        <dbReference type="ChEBI" id="CHEBI:15378"/>
        <dbReference type="ChEBI" id="CHEBI:29969"/>
        <dbReference type="ChEBI" id="CHEBI:57856"/>
        <dbReference type="ChEBI" id="CHEBI:59789"/>
        <dbReference type="ChEBI" id="CHEBI:61961"/>
        <dbReference type="EC" id="2.1.1.359"/>
    </reaction>
    <physiologicalReaction direction="left-to-right" evidence="10 12">
        <dbReference type="Rhea" id="RHEA:60325"/>
    </physiologicalReaction>
</comment>
<comment type="catalytic activity">
    <reaction evidence="12">
        <text>L-lysyl(9)-[histone H3] + 3 S-adenosyl-L-methionine = N(6),N(6),N(6)-trimethyl-L-lysyl(9)-[histone H3] + 3 S-adenosyl-L-homocysteine + 3 H(+)</text>
        <dbReference type="Rhea" id="RHEA:60276"/>
        <dbReference type="Rhea" id="RHEA-COMP:15538"/>
        <dbReference type="Rhea" id="RHEA-COMP:15546"/>
        <dbReference type="ChEBI" id="CHEBI:15378"/>
        <dbReference type="ChEBI" id="CHEBI:29969"/>
        <dbReference type="ChEBI" id="CHEBI:57856"/>
        <dbReference type="ChEBI" id="CHEBI:59789"/>
        <dbReference type="ChEBI" id="CHEBI:61961"/>
        <dbReference type="EC" id="2.1.1.355"/>
    </reaction>
    <physiologicalReaction direction="left-to-right" evidence="12">
        <dbReference type="Rhea" id="RHEA:60277"/>
    </physiologicalReaction>
</comment>
<comment type="catalytic activity">
    <reaction evidence="10">
        <text>L-lysyl(20)-[histone H4] + S-adenosyl-L-methionine = N(6)-methyl-L-lysyl(20)-[histone H4] + S-adenosyl-L-homocysteine + H(+)</text>
        <dbReference type="Rhea" id="RHEA:60344"/>
        <dbReference type="Rhea" id="RHEA-COMP:15554"/>
        <dbReference type="Rhea" id="RHEA-COMP:15555"/>
        <dbReference type="ChEBI" id="CHEBI:15378"/>
        <dbReference type="ChEBI" id="CHEBI:29969"/>
        <dbReference type="ChEBI" id="CHEBI:57856"/>
        <dbReference type="ChEBI" id="CHEBI:59789"/>
        <dbReference type="ChEBI" id="CHEBI:61929"/>
        <dbReference type="EC" id="2.1.1.361"/>
    </reaction>
    <physiologicalReaction direction="left-to-right" evidence="10">
        <dbReference type="Rhea" id="RHEA:60345"/>
    </physiologicalReaction>
</comment>
<comment type="catalytic activity">
    <reaction evidence="10">
        <text>N(6)-methyl-L-lysyl(20)-[histone H4] + S-adenosyl-L-methionine = N(6),N(6)-dimethyl-L-lysyl(20)-[histone H4] + S-adenosyl-L-homocysteine + H(+)</text>
        <dbReference type="Rhea" id="RHEA:60348"/>
        <dbReference type="Rhea" id="RHEA-COMP:15555"/>
        <dbReference type="Rhea" id="RHEA-COMP:15556"/>
        <dbReference type="ChEBI" id="CHEBI:15378"/>
        <dbReference type="ChEBI" id="CHEBI:57856"/>
        <dbReference type="ChEBI" id="CHEBI:59789"/>
        <dbReference type="ChEBI" id="CHEBI:61929"/>
        <dbReference type="ChEBI" id="CHEBI:61976"/>
        <dbReference type="EC" id="2.1.1.362"/>
    </reaction>
    <physiologicalReaction direction="left-to-right" evidence="10">
        <dbReference type="Rhea" id="RHEA:60349"/>
    </physiologicalReaction>
</comment>
<comment type="biophysicochemical properties">
    <kinetics>
        <KM evidence="10">0.17 uM for histone octamer</KM>
        <KM evidence="10">0.19 uM for H3 protein</KM>
        <KM evidence="10">3.21 uM for H3 peptide 1-21</KM>
        <KM evidence="10">5.47 uM for H4 peptide 1-36</KM>
        <KM evidence="10">22.29 uM for S-adenosyl-L-methionine (with histone octamer as substrate)</KM>
        <KM evidence="10">19.01 uM for S-adenosyl-L-methionine (with H3 protein as substrate)</KM>
        <KM evidence="10">8.23 uM for S-adenosyl-L-methionine (with H3 peptide 1-21 as substrate)</KM>
        <KM evidence="10">81.66 uM for S-adenosyl-L-methionine (with H4 peptide 1-36 as substrate)</KM>
        <KM evidence="14">34.7 uM for automethylation</KM>
        <KM evidence="14">8.23 uM for H3 peptide</KM>
    </kinetics>
</comment>
<comment type="subunit">
    <text evidence="9 13 16">Homodimer (PubMed:24095733). Interacts with EHMT2 and CDYL; interaction only takes place when PRDM9 is bound to hotspot DNA (PubMed:27932493). Interacts with CXXC1; this interaction does not link PRDM9-activated recombination hotspot sites with DSB machinery and is not required for the hotspot recognition pathway (PubMed:27932493, PubMed:30365547). Forms a complex with EWSR1, REC8, SYCP3 and SYCP1; complex formation is dependent of phosphorylated form of REC8 and requires PRDM9 bound to hotspot DNA; EWSR1 joins PRDM9 with the chromosomal axis through REC8 (PubMed:27932493).</text>
</comment>
<comment type="subcellular location">
    <subcellularLocation>
        <location evidence="11 13 15">Nucleus</location>
    </subcellularLocation>
    <subcellularLocation>
        <location evidence="15">Chromosome</location>
    </subcellularLocation>
    <text evidence="11">Localizes in nuclei of pre-leptotene, leptotene, and early to mid-zygotene spermatocytes.</text>
</comment>
<comment type="alternative products">
    <event type="alternative splicing"/>
    <isoform>
        <id>Q96EQ9-1</id>
        <name>1</name>
        <name>Meisetz</name>
        <sequence type="displayed"/>
    </isoform>
    <isoform>
        <id>Q96EQ9-2</id>
        <name>2</name>
        <name>Meisetz-S1</name>
        <sequence type="described" ref="VSP_036376 VSP_036377"/>
    </isoform>
    <isoform>
        <id>Q96EQ9-3</id>
        <name>3</name>
        <name>Meisetz-S2</name>
        <sequence type="described" ref="VSP_036375 VSP_036378"/>
    </isoform>
    <isoform>
        <id>Q96EQ9-4</id>
        <name>4</name>
        <sequence type="described" ref="VSP_036374 VSP_036376 VSP_036377"/>
    </isoform>
</comment>
<comment type="tissue specificity">
    <text evidence="6 13">Specifically expressed in germ cells entering meiotic prophase in female fetal gonads and in postnatal testis (PubMed:16292313). Expressed in early meiotic prophase (PubMed:27932493).</text>
</comment>
<comment type="developmental stage">
    <text evidence="6">Specifically expressed during meiotic prophase. Transiently increases in female gonads from 13.5 dpc to 16.5 dpc, the time during which meiosis proceeds from pre-meiotic replication to pachytene stages. Its expression is barely detectable in fetal male gonads. In adults, it is expressed in testis, but not in any other tissue tested. Abundance increases from 10 d post partum (dpp) to 18 dpp, during which time the first wave of spermatogenesis proceeds synchronously from pre-leptotene to pachytene stages.</text>
</comment>
<comment type="domain">
    <text evidence="8 15">The C2H2-type zinc fingers determine the hotspot localization through its binding to specific DNA sequences (PubMed:22028627, PubMed:29478809). Variations in their sequence affect affinity towards DNA-binding motif (PubMed:22028627, PubMed:29478809).</text>
</comment>
<comment type="PTM">
    <text evidence="14">Mono-methylated; automethylated (PubMed:28126738). Tri-methylated; automethylated (PubMed:28126738). Mono-methylation is predominant; automethylation is lower and slower than H3 peptide methylation and is in a highest S-adenosyl-L-methionine concentration-dependent (PubMed:28126738). There are two major sites for automethylation at Lys-368 and Lys-374 (PubMed:28126738). Lysines can be simultaneously methylated, such as Lys-368(me3)/Lys-372(me1), Lys-368(me1)/Lys-374(me1) and Lys-368(me1)/Lys-372(me1)/Lys-374(me1) (PubMed:28126738). Automethylation is an intramolecular (cis) process (PubMed:28126738).</text>
</comment>
<comment type="polymorphism">
    <text evidence="8 15">Several alleles exist depending on both the number of zinc finger C2H2 type domains and their identity (PubMed:22028627). Each allele binds to a specific hotspot set (PubMed:29478809). Both polymorphisms in the zinc finger C2H2 type domains and in DNA target sequence control recombination at hotspot (PubMed:22028627). The affinity of each allele for its DNA-binding site can vary histone methyltransferase activity (PubMed:29478809).</text>
</comment>
<comment type="disruption phenotype">
    <text evidence="6 13">Knockout homozygous mice are sterile in both sexes.</text>
</comment>
<comment type="miscellaneous">
    <text evidence="7">Represents a speciation gene in mus genus. Prdm9 is one of several genes responsible for hybrid sterility between M.musculus and house mouse (PubMed:19074312). Hybrid sterility is defined as a situation where parental forms, each fertile inter se, produce infertile offspring (PubMed:19074312). Intersubspecific hybrids of house mouse display spermatogenic failures that are due to variations in the Prdm9 gene (PubMed:19074312).</text>
</comment>
<comment type="similarity">
    <text evidence="4">Belongs to the class V-like SAM-binding methyltransferase superfamily.</text>
</comment>
<comment type="caution">
    <text evidence="6 9 10 12">Firstly described as not catalyzing the monomethylation of unmethylated H3 peptide (PubMed:16292313). However other in vitro experiments described that can also methylate unmodified 'Lys-4' of histone H3 (PubMed:24095733, PubMed:24785241, PubMed:27362481).</text>
</comment>
<comment type="sequence caution" evidence="19">
    <conflict type="erroneous initiation">
        <sequence resource="EMBL-CDS" id="AAH49903"/>
    </conflict>
</comment>
<protein>
    <recommendedName>
        <fullName evidence="19">Histone-lysine N-methyltransferase PRDM9</fullName>
    </recommendedName>
    <alternativeName>
        <fullName>Hybrid sterility protein 1</fullName>
    </alternativeName>
    <alternativeName>
        <fullName>Meiosis-induced factor containing a PR/SET domain and zinc-finger motif</fullName>
    </alternativeName>
    <alternativeName>
        <fullName>PR domain zinc finger protein 9</fullName>
    </alternativeName>
    <alternativeName>
        <fullName>PR domain-containing protein 9</fullName>
    </alternativeName>
    <alternativeName>
        <fullName evidence="19">Protein-lysine N-methyltransferase PRDM9</fullName>
        <ecNumber evidence="14">2.1.1.-</ecNumber>
    </alternativeName>
    <alternativeName>
        <fullName evidence="19">[histone H3]-lysine36 N-trimethyltransferase PRDM9</fullName>
        <ecNumber evidence="10 12">2.1.1.359</ecNumber>
    </alternativeName>
    <alternativeName>
        <fullName evidence="19">[histone H3]-lysine4 N-trimethyltransferase PRDM9</fullName>
        <ecNumber evidence="6 9 10 12">2.1.1.354</ecNumber>
    </alternativeName>
    <alternativeName>
        <fullName evidence="19">[histone H3]-lysine9 N-trimethyltransferase PRDM9</fullName>
        <ecNumber evidence="12">2.1.1.355</ecNumber>
    </alternativeName>
    <alternativeName>
        <fullName evidence="19">[histone H4]-N-methyl-L-lysine20 N-methyltransferase PRDM9</fullName>
        <ecNumber evidence="10">2.1.1.362</ecNumber>
    </alternativeName>
    <alternativeName>
        <fullName evidence="19">[histone H4]-lysine20 N-methyltransferase PRDM9</fullName>
        <ecNumber evidence="10">2.1.1.361</ecNumber>
    </alternativeName>
</protein>
<reference key="1">
    <citation type="submission" date="2003-05" db="EMBL/GenBank/DDBJ databases">
        <title>Genomic sequence analysis in the mouse T-complex region.</title>
        <authorList>
            <person name="Brathwaite M."/>
            <person name="Waeltz P."/>
            <person name="Nagaraja R."/>
        </authorList>
    </citation>
    <scope>NUCLEOTIDE SEQUENCE [LARGE SCALE GENOMIC DNA]</scope>
    <source>
        <strain>C57BL/6J</strain>
    </source>
</reference>
<reference key="2">
    <citation type="journal article" date="2009" name="PLoS Biol.">
        <title>Lineage-specific biology revealed by a finished genome assembly of the mouse.</title>
        <authorList>
            <person name="Church D.M."/>
            <person name="Goodstadt L."/>
            <person name="Hillier L.W."/>
            <person name="Zody M.C."/>
            <person name="Goldstein S."/>
            <person name="She X."/>
            <person name="Bult C.J."/>
            <person name="Agarwala R."/>
            <person name="Cherry J.L."/>
            <person name="DiCuccio M."/>
            <person name="Hlavina W."/>
            <person name="Kapustin Y."/>
            <person name="Meric P."/>
            <person name="Maglott D."/>
            <person name="Birtle Z."/>
            <person name="Marques A.C."/>
            <person name="Graves T."/>
            <person name="Zhou S."/>
            <person name="Teague B."/>
            <person name="Potamousis K."/>
            <person name="Churas C."/>
            <person name="Place M."/>
            <person name="Herschleb J."/>
            <person name="Runnheim R."/>
            <person name="Forrest D."/>
            <person name="Amos-Landgraf J."/>
            <person name="Schwartz D.C."/>
            <person name="Cheng Z."/>
            <person name="Lindblad-Toh K."/>
            <person name="Eichler E.E."/>
            <person name="Ponting C.P."/>
        </authorList>
    </citation>
    <scope>NUCLEOTIDE SEQUENCE [LARGE SCALE GENOMIC DNA]</scope>
    <source>
        <strain>C57BL/6J</strain>
    </source>
</reference>
<reference key="3">
    <citation type="journal article" date="2004" name="Genome Res.">
        <title>The status, quality, and expansion of the NIH full-length cDNA project: the Mammalian Gene Collection (MGC).</title>
        <authorList>
            <consortium name="The MGC Project Team"/>
        </authorList>
    </citation>
    <scope>NUCLEOTIDE SEQUENCE [LARGE SCALE MRNA] (ISOFORM 4)</scope>
    <source>
        <tissue>Eye</tissue>
    </source>
</reference>
<reference key="4">
    <citation type="journal article" date="2005" name="Nature">
        <title>A histone H3 methyltransferase controls epigenetic events required for meiotic prophase.</title>
        <authorList>
            <person name="Hayashi K."/>
            <person name="Yoshida K."/>
            <person name="Matsui Y."/>
        </authorList>
    </citation>
    <scope>FUNCTION</scope>
    <scope>CATALYTIC ACTIVITY</scope>
    <scope>ALTERNATIVE SPLICING (ISOFORMS 1; 2 AND 3)</scope>
    <scope>TISSUE SPECIFICITY</scope>
    <scope>DEVELOPMENTAL STAGE</scope>
    <scope>DISRUPTION PHENOTYPE</scope>
    <scope>MUTAGENESIS OF TYR-276 AND GLY-278</scope>
</reference>
<reference key="5">
    <citation type="journal article" date="2009" name="Science">
        <title>A mouse speciation gene encodes a meiotic histone H3 methyltransferase.</title>
        <authorList>
            <person name="Mihola O."/>
            <person name="Trachtulec Z."/>
            <person name="Vlcek C."/>
            <person name="Schimenti J.C."/>
            <person name="Forejt J."/>
        </authorList>
    </citation>
    <scope>IDENTIFICATION AS A SPECIATION GENE</scope>
</reference>
<reference key="6">
    <citation type="journal article" date="2011" name="PLoS Biol.">
        <title>Mouse PRDM9 DNA-binding specificity determines sites of histone H3 lysine 4 trimethylation for initiation of meiotic recombination.</title>
        <authorList>
            <person name="Grey C."/>
            <person name="Barthes P."/>
            <person name="Chauveau-Le Friec G."/>
            <person name="Langa F."/>
            <person name="Baudat F."/>
            <person name="de Massy B."/>
        </authorList>
    </citation>
    <scope>FUNCTION</scope>
    <scope>DOMAIN</scope>
    <scope>POLYMORPHISM</scope>
</reference>
<reference key="7">
    <citation type="journal article" date="2014" name="Biochem. J.">
        <title>Characterization of the histone methyltransferase PRDM9 using biochemical, biophysical and chemical biology techniques.</title>
        <authorList>
            <person name="Koh-Stenta X."/>
            <person name="Joy J."/>
            <person name="Poulsen A."/>
            <person name="Li R."/>
            <person name="Tan Y."/>
            <person name="Shim Y."/>
            <person name="Min J.H."/>
            <person name="Wu L."/>
            <person name="Ngo A."/>
            <person name="Peng J."/>
            <person name="Seetoh W.G."/>
            <person name="Cao J."/>
            <person name="Wee J.L."/>
            <person name="Kwek P.Z."/>
            <person name="Hung A."/>
            <person name="Lakshmanan U."/>
            <person name="Flotow H."/>
            <person name="Guccione E."/>
            <person name="Hill J."/>
        </authorList>
    </citation>
    <scope>CATALYTIC ACTIVITY</scope>
    <scope>FUNCTION</scope>
    <scope>BIOPHYSICOCHEMICAL PROPERTIES</scope>
    <scope>MUTAGENESIS OF CYS-321</scope>
</reference>
<reference key="8">
    <citation type="journal article" date="2015" name="Chromosoma">
        <title>Nuclear localization of PRDM9 and its role in meiotic chromatin modifications and homologous synapsis.</title>
        <authorList>
            <person name="Sun F."/>
            <person name="Fujiwara Y."/>
            <person name="Reinholdt L.G."/>
            <person name="Hu J."/>
            <person name="Saxl R.L."/>
            <person name="Baker C.L."/>
            <person name="Petkov P.M."/>
            <person name="Paigen K."/>
            <person name="Handel M.A."/>
        </authorList>
    </citation>
    <scope>FUNCTION</scope>
    <scope>SUBCELLULAR LOCATION</scope>
</reference>
<reference key="9">
    <citation type="journal article" date="2016" name="PLoS Genet.">
        <title>The Meiotic Recombination Activator PRDM9 Trimethylates Both H3K36 and H3K4 at Recombination Hotspots In Vivo.</title>
        <authorList>
            <person name="Powers N.R."/>
            <person name="Parvanov E.D."/>
            <person name="Baker C.L."/>
            <person name="Walker M."/>
            <person name="Petkov P.M."/>
            <person name="Paigen K."/>
        </authorList>
    </citation>
    <scope>FUNCTION</scope>
    <scope>CATALYTIC ACTIVITY</scope>
</reference>
<reference key="10">
    <citation type="journal article" date="2017" name="Biochem. J.">
        <title>Discovery and characterisation of the automethylation properties of PRDM9.</title>
        <authorList>
            <person name="Koh-Stenta X."/>
            <person name="Poulsen A."/>
            <person name="Li R."/>
            <person name="Wee J.L."/>
            <person name="Kwek P.Z."/>
            <person name="Chew S.Y."/>
            <person name="Peng J."/>
            <person name="Wu L."/>
            <person name="Guccione E."/>
            <person name="Joy J."/>
            <person name="Hill J."/>
        </authorList>
    </citation>
    <scope>METHYLATION AT LYS-368; LYS-374 AND LYS-372</scope>
    <scope>BIOPHYSICOCHEMICAL PROPERTIES</scope>
    <scope>IDENTIFICATION BY MASS SPECTROMETRY</scope>
    <scope>MUTAGENESIS OF LYS-207; LYS-226; LYS-297; CYS-321; LYS-338; LYS-368; LYS-372; LYS-374 AND LYS-375</scope>
    <scope>FUNCTION</scope>
    <scope>CATALYTIC ACTIVITY</scope>
</reference>
<reference key="11">
    <citation type="journal article" date="2017" name="Mol. Biol. Cell">
        <title>PRDM9 interactions with other proteins provide a link between recombination hotspots and the chromosomal axis in meiosis.</title>
        <authorList>
            <person name="Parvanov E.D."/>
            <person name="Tian H."/>
            <person name="Billings T."/>
            <person name="Saxl R.L."/>
            <person name="Spruce C."/>
            <person name="Aithal R."/>
            <person name="Krejci L."/>
            <person name="Paigen K."/>
            <person name="Petkov P.M."/>
        </authorList>
    </citation>
    <scope>INTERACTION WITH CXXC1; EWSR1; EHMT2; REC8; SYCP3; SYCP1 AND CDYL</scope>
    <scope>DISRUPTION PHENOTYPE</scope>
    <scope>TISSUE SPECIFICITY</scope>
    <scope>SUBCELLULAR LOCATION</scope>
    <scope>FUNCTION</scope>
</reference>
<reference key="12">
    <citation type="journal article" date="2018" name="Mol. Cell">
        <title>PRDM9 Methyltransferase Activity Is Essential for Meiotic DNA Double-Strand Break Formation at Its Binding Sites.</title>
        <authorList>
            <person name="Diagouraga B."/>
            <person name="Clement J.A.J."/>
            <person name="Duret L."/>
            <person name="Kadlec J."/>
            <person name="de Massy B."/>
            <person name="Baudat F."/>
        </authorList>
    </citation>
    <scope>SUBCELLULAR LOCATION</scope>
    <scope>POLYMORPHISM</scope>
    <scope>FUNCTION</scope>
    <scope>DOMAIN</scope>
</reference>
<reference key="13">
    <citation type="journal article" date="2018" name="PLoS Genet.">
        <title>CXXC1 is not essential for normal DNA double-strand break formation and meiotic recombination in mouse.</title>
        <authorList>
            <person name="Tian H."/>
            <person name="Billings T."/>
            <person name="Petkov P.M."/>
        </authorList>
    </citation>
    <scope>INTERACTION WITH CXXC1</scope>
</reference>
<reference key="14">
    <citation type="journal article" date="2020" name="Elife">
        <title>The histone modification reader ZCWPW1 links histone methylation to PRDM9-induced double-strand break repair.</title>
        <authorList>
            <person name="Huang T."/>
            <person name="Yuan S."/>
            <person name="Gao L."/>
            <person name="Li M."/>
            <person name="Yu X."/>
            <person name="Zhang J."/>
            <person name="Yin Y."/>
            <person name="Liu C."/>
            <person name="Zhang C."/>
            <person name="Lu G."/>
            <person name="Li W."/>
            <person name="Liu J."/>
            <person name="Chen Z.J."/>
            <person name="Liu H."/>
        </authorList>
    </citation>
    <scope>FUNCTION</scope>
</reference>
<reference evidence="21" key="15">
    <citation type="journal article" date="2013" name="Cell Rep.">
        <title>Molecular basis for the regulation of the H3K4 methyltransferase activity of PRDM9.</title>
        <authorList>
            <person name="Wu H."/>
            <person name="Mathioudakis N."/>
            <person name="Diagouraga B."/>
            <person name="Dong A."/>
            <person name="Dombrovski L."/>
            <person name="Baudat F."/>
            <person name="Cusack S."/>
            <person name="de Massy B."/>
            <person name="Kadlec J."/>
        </authorList>
    </citation>
    <scope>X-RAY CRYSTALLOGRAPHY (2.30 ANGSTROMS) OF 198-368 IN COMPLEX WITH DIMETHYLATED H3K4 PEPTIDE; ZINC AND S-ADENOSYL-L-METHIONINE</scope>
    <scope>CATALYTIC ACTIVITY</scope>
    <scope>REGION</scope>
    <scope>SUBUNIT</scope>
    <scope>MUTAGENESIS OF TYR-276; TYR-341 AND TYR-357</scope>
    <scope>FUNCTION</scope>
</reference>